<reference key="1">
    <citation type="journal article" date="2004" name="Genome Res.">
        <title>The genomic sequence and comparative analysis of the rat major histocompatibility complex.</title>
        <authorList>
            <person name="Hurt P."/>
            <person name="Walter L."/>
            <person name="Sudbrak R."/>
            <person name="Klages S."/>
            <person name="Mueller I."/>
            <person name="Shiina T."/>
            <person name="Inoko H."/>
            <person name="Lehrach H."/>
            <person name="Guenther E."/>
            <person name="Reinhardt R."/>
            <person name="Himmelbauer H."/>
        </authorList>
    </citation>
    <scope>NUCLEOTIDE SEQUENCE [LARGE SCALE GENOMIC DNA]</scope>
    <source>
        <strain>Brown Norway</strain>
    </source>
</reference>
<reference key="2">
    <citation type="journal article" date="2004" name="Genome Res.">
        <title>The status, quality, and expansion of the NIH full-length cDNA project: the Mammalian Gene Collection (MGC).</title>
        <authorList>
            <consortium name="The MGC Project Team"/>
        </authorList>
    </citation>
    <scope>NUCLEOTIDE SEQUENCE [LARGE SCALE MRNA]</scope>
    <source>
        <tissue>Prostate</tissue>
    </source>
</reference>
<reference key="3">
    <citation type="journal article" date="2012" name="Nat. Commun.">
        <title>Quantitative maps of protein phosphorylation sites across 14 different rat organs and tissues.</title>
        <authorList>
            <person name="Lundby A."/>
            <person name="Secher A."/>
            <person name="Lage K."/>
            <person name="Nordsborg N.B."/>
            <person name="Dmytriyev A."/>
            <person name="Lundby C."/>
            <person name="Olsen J.V."/>
        </authorList>
    </citation>
    <scope>PHOSPHORYLATION [LARGE SCALE ANALYSIS] AT SER-34 AND SER-35</scope>
    <scope>IDENTIFICATION BY MASS SPECTROMETRY [LARGE SCALE ANALYSIS]</scope>
</reference>
<organism>
    <name type="scientific">Rattus norvegicus</name>
    <name type="common">Rat</name>
    <dbReference type="NCBI Taxonomy" id="10116"/>
    <lineage>
        <taxon>Eukaryota</taxon>
        <taxon>Metazoa</taxon>
        <taxon>Chordata</taxon>
        <taxon>Craniata</taxon>
        <taxon>Vertebrata</taxon>
        <taxon>Euteleostomi</taxon>
        <taxon>Mammalia</taxon>
        <taxon>Eutheria</taxon>
        <taxon>Euarchontoglires</taxon>
        <taxon>Glires</taxon>
        <taxon>Rodentia</taxon>
        <taxon>Myomorpha</taxon>
        <taxon>Muroidea</taxon>
        <taxon>Muridae</taxon>
        <taxon>Murinae</taxon>
        <taxon>Rattus</taxon>
    </lineage>
</organism>
<gene>
    <name type="primary">G4</name>
</gene>
<name>CF047_RAT</name>
<evidence type="ECO:0000250" key="1">
    <source>
        <dbReference type="UniProtKB" id="O95873"/>
    </source>
</evidence>
<evidence type="ECO:0000256" key="2">
    <source>
        <dbReference type="SAM" id="MobiDB-lite"/>
    </source>
</evidence>
<evidence type="ECO:0007744" key="3">
    <source>
    </source>
</evidence>
<accession>Q6MG51</accession>
<accession>Q3T1L1</accession>
<protein>
    <recommendedName>
        <fullName>Uncharacterized protein C6orf47 homolog</fullName>
    </recommendedName>
</protein>
<sequence length="293" mass="31825">MFLRRLGGWLPRPWGRKKSTKTDLPAPEPRWVDSSPENSGSDWDSAPETMGDVGPLKTKDSGTRRPPQAAPESSRDTRVYQLGSKRMDSLKKDKAASAIQESARLETGGAVPKLDLDPVDSGGMKNLGVSPQGRLGTTGPEALLEKPGRRQKLLRWLRGEPGAPSHYLQDPEEYLQISTNLTLHLLELLASALLALCSRPLRAILDALGLRGPVGLWLHGLLCFLAALHGLHAVLSLLTAHPLHFACLFGLLQALVLAVSLREPVEDEETADWESEGQGKEAKEQTEGPGRAL</sequence>
<dbReference type="EMBL" id="BX883045">
    <property type="protein sequence ID" value="CAE83995.1"/>
    <property type="molecule type" value="Genomic_DNA"/>
</dbReference>
<dbReference type="EMBL" id="BC101859">
    <property type="protein sequence ID" value="AAI01860.1"/>
    <property type="molecule type" value="mRNA"/>
</dbReference>
<dbReference type="RefSeq" id="NP_001003975.1">
    <property type="nucleotide sequence ID" value="NM_001003975.3"/>
</dbReference>
<dbReference type="RefSeq" id="XP_063135453.1">
    <property type="nucleotide sequence ID" value="XM_063279383.1"/>
</dbReference>
<dbReference type="FunCoup" id="Q6MG51">
    <property type="interactions" value="251"/>
</dbReference>
<dbReference type="STRING" id="10116.ENSRNOP00000057545"/>
<dbReference type="iPTMnet" id="Q6MG51"/>
<dbReference type="PhosphoSitePlus" id="Q6MG51"/>
<dbReference type="PaxDb" id="10116-ENSRNOP00000057545"/>
<dbReference type="Ensembl" id="ENSRNOT00000060819.5">
    <property type="protein sequence ID" value="ENSRNOP00000057545.2"/>
    <property type="gene ID" value="ENSRNOG00000039658.5"/>
</dbReference>
<dbReference type="Ensembl" id="ENSRNOT00000117404.1">
    <property type="protein sequence ID" value="ENSRNOP00000091132.1"/>
    <property type="gene ID" value="ENSRNOG00000039658.5"/>
</dbReference>
<dbReference type="GeneID" id="406868"/>
<dbReference type="KEGG" id="rno:406868"/>
<dbReference type="UCSC" id="RGD:1303038">
    <property type="organism name" value="rat"/>
</dbReference>
<dbReference type="AGR" id="RGD:1303038"/>
<dbReference type="CTD" id="406868"/>
<dbReference type="RGD" id="1303038">
    <property type="gene designation" value="G4"/>
</dbReference>
<dbReference type="eggNOG" id="ENOG502SNQC">
    <property type="taxonomic scope" value="Eukaryota"/>
</dbReference>
<dbReference type="GeneTree" id="ENSGT00390000009270"/>
<dbReference type="HOGENOM" id="CLU_081876_0_0_1"/>
<dbReference type="InParanoid" id="Q6MG51"/>
<dbReference type="OMA" id="KWDKTVS"/>
<dbReference type="OrthoDB" id="9950360at2759"/>
<dbReference type="PhylomeDB" id="Q6MG51"/>
<dbReference type="TreeFam" id="TF339331"/>
<dbReference type="PRO" id="PR:Q6MG51"/>
<dbReference type="Proteomes" id="UP000002494">
    <property type="component" value="Chromosome 20"/>
</dbReference>
<dbReference type="Bgee" id="ENSRNOG00000039658">
    <property type="expression patterns" value="Expressed in duodenum and 19 other cell types or tissues"/>
</dbReference>
<dbReference type="InterPro" id="IPR029073">
    <property type="entry name" value="DUF4661"/>
</dbReference>
<dbReference type="PANTHER" id="PTHR14307">
    <property type="entry name" value="C6ORF47 FAMILY MEMBER"/>
    <property type="match status" value="1"/>
</dbReference>
<dbReference type="PANTHER" id="PTHR14307:SF0">
    <property type="entry name" value="SI:CH73-25F10.6"/>
    <property type="match status" value="1"/>
</dbReference>
<dbReference type="Pfam" id="PF15576">
    <property type="entry name" value="DUF4661"/>
    <property type="match status" value="1"/>
</dbReference>
<keyword id="KW-0597">Phosphoprotein</keyword>
<keyword id="KW-1185">Reference proteome</keyword>
<proteinExistence type="evidence at protein level"/>
<feature type="chain" id="PRO_0000089506" description="Uncharacterized protein C6orf47 homolog">
    <location>
        <begin position="1"/>
        <end position="293"/>
    </location>
</feature>
<feature type="region of interest" description="Disordered" evidence="2">
    <location>
        <begin position="1"/>
        <end position="95"/>
    </location>
</feature>
<feature type="region of interest" description="Disordered" evidence="2">
    <location>
        <begin position="268"/>
        <end position="293"/>
    </location>
</feature>
<feature type="compositionally biased region" description="Basic and acidic residues" evidence="2">
    <location>
        <begin position="85"/>
        <end position="95"/>
    </location>
</feature>
<feature type="compositionally biased region" description="Basic and acidic residues" evidence="2">
    <location>
        <begin position="277"/>
        <end position="286"/>
    </location>
</feature>
<feature type="modified residue" description="Phosphoserine" evidence="3">
    <location>
        <position position="34"/>
    </location>
</feature>
<feature type="modified residue" description="Phosphoserine" evidence="3">
    <location>
        <position position="35"/>
    </location>
</feature>
<feature type="modified residue" description="Phosphoserine" evidence="1">
    <location>
        <position position="89"/>
    </location>
</feature>